<proteinExistence type="inferred from homology"/>
<dbReference type="EMBL" id="CP000099">
    <property type="protein sequence ID" value="AAZ72560.1"/>
    <property type="molecule type" value="Genomic_DNA"/>
</dbReference>
<dbReference type="SMR" id="Q464Y2"/>
<dbReference type="STRING" id="269797.Mbar_A3697"/>
<dbReference type="PaxDb" id="269797-Mbar_A3697"/>
<dbReference type="KEGG" id="mba:Mbar_A3697"/>
<dbReference type="eggNOG" id="arCOG04376">
    <property type="taxonomic scope" value="Archaea"/>
</dbReference>
<dbReference type="HOGENOM" id="CLU_074757_0_0_2"/>
<dbReference type="OrthoDB" id="50299at2157"/>
<dbReference type="Gene3D" id="3.10.520.10">
    <property type="entry name" value="ApbE-like domains"/>
    <property type="match status" value="1"/>
</dbReference>
<dbReference type="HAMAP" id="MF_01079">
    <property type="entry name" value="UPF0280"/>
    <property type="match status" value="1"/>
</dbReference>
<dbReference type="InterPro" id="IPR003374">
    <property type="entry name" value="ApbE-like_sf"/>
</dbReference>
<dbReference type="InterPro" id="IPR037456">
    <property type="entry name" value="MA1715-like"/>
</dbReference>
<dbReference type="InterPro" id="IPR007183">
    <property type="entry name" value="UPF0280"/>
</dbReference>
<dbReference type="NCBIfam" id="NF003324">
    <property type="entry name" value="PRK04334.1-4"/>
    <property type="match status" value="1"/>
</dbReference>
<dbReference type="PIRSF" id="PIRSF006421">
    <property type="entry name" value="UCP006421"/>
    <property type="match status" value="1"/>
</dbReference>
<dbReference type="SUPFAM" id="SSF143631">
    <property type="entry name" value="ApbE-like"/>
    <property type="match status" value="1"/>
</dbReference>
<organism>
    <name type="scientific">Methanosarcina barkeri (strain Fusaro / DSM 804)</name>
    <dbReference type="NCBI Taxonomy" id="269797"/>
    <lineage>
        <taxon>Archaea</taxon>
        <taxon>Methanobacteriati</taxon>
        <taxon>Methanobacteriota</taxon>
        <taxon>Stenosarchaea group</taxon>
        <taxon>Methanomicrobia</taxon>
        <taxon>Methanosarcinales</taxon>
        <taxon>Methanosarcinaceae</taxon>
        <taxon>Methanosarcina</taxon>
    </lineage>
</organism>
<feature type="chain" id="PRO_1000064804" description="UPF0280 protein Mbar_A3697">
    <location>
        <begin position="1"/>
        <end position="253"/>
    </location>
</feature>
<protein>
    <recommendedName>
        <fullName evidence="1">UPF0280 protein Mbar_A3697</fullName>
    </recommendedName>
</protein>
<evidence type="ECO:0000255" key="1">
    <source>
        <dbReference type="HAMAP-Rule" id="MF_01079"/>
    </source>
</evidence>
<accession>Q464Y2</accession>
<reference key="1">
    <citation type="journal article" date="2006" name="J. Bacteriol.">
        <title>The Methanosarcina barkeri genome: comparative analysis with Methanosarcina acetivorans and Methanosarcina mazei reveals extensive rearrangement within methanosarcinal genomes.</title>
        <authorList>
            <person name="Maeder D.L."/>
            <person name="Anderson I."/>
            <person name="Brettin T.S."/>
            <person name="Bruce D.C."/>
            <person name="Gilna P."/>
            <person name="Han C.S."/>
            <person name="Lapidus A."/>
            <person name="Metcalf W.W."/>
            <person name="Saunders E."/>
            <person name="Tapia R."/>
            <person name="Sowers K.R."/>
        </authorList>
    </citation>
    <scope>NUCLEOTIDE SEQUENCE [LARGE SCALE GENOMIC DNA]</scope>
    <source>
        <strain>Fusaro / DSM 804</strain>
    </source>
</reference>
<comment type="similarity">
    <text evidence="1">Belongs to the UPF0280 family.</text>
</comment>
<sequence>MSDPINEHANEPASFPIKEHFQLKETIVTIAADNLAHIEAAKEAIRIHRAALETYIFSDPYFQLTLEPYECPENAPEVVRRMVKAGNTMGIGPMSAVAGTISALAVESMVKAGAKYAIVDNGGDIALINDRPVVVGIYAGQSTIKNLGLVFEPRGSITGVCTSAGTVGPSISFGMADAAAVFSDDVSLADAAATALGNEVNIGKESVEASFKAVKGIPEIKGALVIQGEYIGMWGQVPRVTRADVRYEYITKA</sequence>
<gene>
    <name type="ordered locus">Mbar_A3697</name>
</gene>
<name>Y3697_METBF</name>